<reference key="1">
    <citation type="journal article" date="2008" name="BMC Genomics">
        <title>Genome sequence and rapid evolution of the rice pathogen Xanthomonas oryzae pv. oryzae PXO99A.</title>
        <authorList>
            <person name="Salzberg S.L."/>
            <person name="Sommer D.D."/>
            <person name="Schatz M.C."/>
            <person name="Phillippy A.M."/>
            <person name="Rabinowicz P.D."/>
            <person name="Tsuge S."/>
            <person name="Furutani A."/>
            <person name="Ochiai H."/>
            <person name="Delcher A.L."/>
            <person name="Kelley D."/>
            <person name="Madupu R."/>
            <person name="Puiu D."/>
            <person name="Radune D."/>
            <person name="Shumway M."/>
            <person name="Trapnell C."/>
            <person name="Aparna G."/>
            <person name="Jha G."/>
            <person name="Pandey A."/>
            <person name="Patil P.B."/>
            <person name="Ishihara H."/>
            <person name="Meyer D.F."/>
            <person name="Szurek B."/>
            <person name="Verdier V."/>
            <person name="Koebnik R."/>
            <person name="Dow J.M."/>
            <person name="Ryan R.P."/>
            <person name="Hirata H."/>
            <person name="Tsuyumu S."/>
            <person name="Won Lee S."/>
            <person name="Seo Y.-S."/>
            <person name="Sriariyanum M."/>
            <person name="Ronald P.C."/>
            <person name="Sonti R.V."/>
            <person name="Van Sluys M.-A."/>
            <person name="Leach J.E."/>
            <person name="White F.F."/>
            <person name="Bogdanove A.J."/>
        </authorList>
    </citation>
    <scope>NUCLEOTIDE SEQUENCE [LARGE SCALE GENOMIC DNA]</scope>
    <source>
        <strain>PXO99A</strain>
    </source>
</reference>
<dbReference type="EC" id="1.3.1.98" evidence="1"/>
<dbReference type="EMBL" id="CP000967">
    <property type="protein sequence ID" value="ACD58982.1"/>
    <property type="molecule type" value="Genomic_DNA"/>
</dbReference>
<dbReference type="RefSeq" id="WP_012444966.1">
    <property type="nucleotide sequence ID" value="NC_010717.2"/>
</dbReference>
<dbReference type="SMR" id="B2SLC0"/>
<dbReference type="KEGG" id="xop:PXO_00806"/>
<dbReference type="eggNOG" id="COG0812">
    <property type="taxonomic scope" value="Bacteria"/>
</dbReference>
<dbReference type="HOGENOM" id="CLU_035304_0_0_6"/>
<dbReference type="UniPathway" id="UPA00219"/>
<dbReference type="Proteomes" id="UP000001740">
    <property type="component" value="Chromosome"/>
</dbReference>
<dbReference type="GO" id="GO:0005829">
    <property type="term" value="C:cytosol"/>
    <property type="evidence" value="ECO:0007669"/>
    <property type="project" value="TreeGrafter"/>
</dbReference>
<dbReference type="GO" id="GO:0071949">
    <property type="term" value="F:FAD binding"/>
    <property type="evidence" value="ECO:0007669"/>
    <property type="project" value="InterPro"/>
</dbReference>
<dbReference type="GO" id="GO:0008762">
    <property type="term" value="F:UDP-N-acetylmuramate dehydrogenase activity"/>
    <property type="evidence" value="ECO:0007669"/>
    <property type="project" value="UniProtKB-UniRule"/>
</dbReference>
<dbReference type="GO" id="GO:0051301">
    <property type="term" value="P:cell division"/>
    <property type="evidence" value="ECO:0007669"/>
    <property type="project" value="UniProtKB-KW"/>
</dbReference>
<dbReference type="GO" id="GO:0071555">
    <property type="term" value="P:cell wall organization"/>
    <property type="evidence" value="ECO:0007669"/>
    <property type="project" value="UniProtKB-KW"/>
</dbReference>
<dbReference type="GO" id="GO:0009252">
    <property type="term" value="P:peptidoglycan biosynthetic process"/>
    <property type="evidence" value="ECO:0007669"/>
    <property type="project" value="UniProtKB-UniRule"/>
</dbReference>
<dbReference type="GO" id="GO:0008360">
    <property type="term" value="P:regulation of cell shape"/>
    <property type="evidence" value="ECO:0007669"/>
    <property type="project" value="UniProtKB-KW"/>
</dbReference>
<dbReference type="Gene3D" id="3.30.465.10">
    <property type="match status" value="1"/>
</dbReference>
<dbReference type="Gene3D" id="3.90.78.10">
    <property type="entry name" value="UDP-N-acetylenolpyruvoylglucosamine reductase, C-terminal domain"/>
    <property type="match status" value="1"/>
</dbReference>
<dbReference type="Gene3D" id="3.30.43.10">
    <property type="entry name" value="Uridine Diphospho-n-acetylenolpyruvylglucosamine Reductase, domain 2"/>
    <property type="match status" value="1"/>
</dbReference>
<dbReference type="HAMAP" id="MF_00037">
    <property type="entry name" value="MurB"/>
    <property type="match status" value="1"/>
</dbReference>
<dbReference type="InterPro" id="IPR016166">
    <property type="entry name" value="FAD-bd_PCMH"/>
</dbReference>
<dbReference type="InterPro" id="IPR036318">
    <property type="entry name" value="FAD-bd_PCMH-like_sf"/>
</dbReference>
<dbReference type="InterPro" id="IPR016167">
    <property type="entry name" value="FAD-bd_PCMH_sub1"/>
</dbReference>
<dbReference type="InterPro" id="IPR016169">
    <property type="entry name" value="FAD-bd_PCMH_sub2"/>
</dbReference>
<dbReference type="InterPro" id="IPR003170">
    <property type="entry name" value="MurB"/>
</dbReference>
<dbReference type="InterPro" id="IPR011601">
    <property type="entry name" value="MurB_C"/>
</dbReference>
<dbReference type="InterPro" id="IPR036635">
    <property type="entry name" value="MurB_C_sf"/>
</dbReference>
<dbReference type="InterPro" id="IPR006094">
    <property type="entry name" value="Oxid_FAD_bind_N"/>
</dbReference>
<dbReference type="NCBIfam" id="TIGR00179">
    <property type="entry name" value="murB"/>
    <property type="match status" value="1"/>
</dbReference>
<dbReference type="NCBIfam" id="NF000755">
    <property type="entry name" value="PRK00046.1"/>
    <property type="match status" value="1"/>
</dbReference>
<dbReference type="NCBIfam" id="NF010478">
    <property type="entry name" value="PRK13903.1"/>
    <property type="match status" value="1"/>
</dbReference>
<dbReference type="PANTHER" id="PTHR21071">
    <property type="entry name" value="UDP-N-ACETYLENOLPYRUVOYLGLUCOSAMINE REDUCTASE"/>
    <property type="match status" value="1"/>
</dbReference>
<dbReference type="PANTHER" id="PTHR21071:SF4">
    <property type="entry name" value="UDP-N-ACETYLENOLPYRUVOYLGLUCOSAMINE REDUCTASE"/>
    <property type="match status" value="1"/>
</dbReference>
<dbReference type="Pfam" id="PF01565">
    <property type="entry name" value="FAD_binding_4"/>
    <property type="match status" value="1"/>
</dbReference>
<dbReference type="Pfam" id="PF02873">
    <property type="entry name" value="MurB_C"/>
    <property type="match status" value="1"/>
</dbReference>
<dbReference type="SUPFAM" id="SSF56176">
    <property type="entry name" value="FAD-binding/transporter-associated domain-like"/>
    <property type="match status" value="1"/>
</dbReference>
<dbReference type="SUPFAM" id="SSF56194">
    <property type="entry name" value="Uridine diphospho-N-Acetylenolpyruvylglucosamine reductase, MurB, C-terminal domain"/>
    <property type="match status" value="1"/>
</dbReference>
<dbReference type="PROSITE" id="PS51387">
    <property type="entry name" value="FAD_PCMH"/>
    <property type="match status" value="1"/>
</dbReference>
<gene>
    <name evidence="1" type="primary">murB</name>
    <name type="ordered locus">PXO_00806</name>
</gene>
<proteinExistence type="inferred from homology"/>
<evidence type="ECO:0000255" key="1">
    <source>
        <dbReference type="HAMAP-Rule" id="MF_00037"/>
    </source>
</evidence>
<protein>
    <recommendedName>
        <fullName evidence="1">UDP-N-acetylenolpyruvoylglucosamine reductase</fullName>
        <ecNumber evidence="1">1.3.1.98</ecNumber>
    </recommendedName>
    <alternativeName>
        <fullName evidence="1">UDP-N-acetylmuramate dehydrogenase</fullName>
    </alternativeName>
</protein>
<keyword id="KW-0131">Cell cycle</keyword>
<keyword id="KW-0132">Cell division</keyword>
<keyword id="KW-0133">Cell shape</keyword>
<keyword id="KW-0961">Cell wall biogenesis/degradation</keyword>
<keyword id="KW-0963">Cytoplasm</keyword>
<keyword id="KW-0274">FAD</keyword>
<keyword id="KW-0285">Flavoprotein</keyword>
<keyword id="KW-0521">NADP</keyword>
<keyword id="KW-0560">Oxidoreductase</keyword>
<keyword id="KW-0573">Peptidoglycan synthesis</keyword>
<name>MURB_XANOP</name>
<accession>B2SLC0</accession>
<organism>
    <name type="scientific">Xanthomonas oryzae pv. oryzae (strain PXO99A)</name>
    <dbReference type="NCBI Taxonomy" id="360094"/>
    <lineage>
        <taxon>Bacteria</taxon>
        <taxon>Pseudomonadati</taxon>
        <taxon>Pseudomonadota</taxon>
        <taxon>Gammaproteobacteria</taxon>
        <taxon>Lysobacterales</taxon>
        <taxon>Lysobacteraceae</taxon>
        <taxon>Xanthomonas</taxon>
    </lineage>
</organism>
<sequence length="350" mass="37810">MSDTTQVGWQLSEHAPLRALNTFHVEATARWLLSVHTPEALPQALAAPEIADQPLLVLGSGSNVLLAGDPPGCVLCFENRDTAIIAHHADHAIVRAGAGVNWHALVLYSLQQGLSGLENLALIPGTVGACPIQNIGAYGAQVGDFIHVVEAFDRHHQQFVRLDAAACALGYRDSVFKQQPERYLIVAVEFNLPLLCELRLDYAGIREELASMGAELARAADVAQAVINIRQRKLPDPDVLGNAGSFFKNPLLPNEQIAALQASFADMPVYPGEHAGLGKLSAAWLIEQCGWKGRREGDAGVSPEHALVLVNYGTASGAQLLDFARRIAESVRERYSVILEPEPRIIGAHW</sequence>
<comment type="function">
    <text evidence="1">Cell wall formation.</text>
</comment>
<comment type="catalytic activity">
    <reaction evidence="1">
        <text>UDP-N-acetyl-alpha-D-muramate + NADP(+) = UDP-N-acetyl-3-O-(1-carboxyvinyl)-alpha-D-glucosamine + NADPH + H(+)</text>
        <dbReference type="Rhea" id="RHEA:12248"/>
        <dbReference type="ChEBI" id="CHEBI:15378"/>
        <dbReference type="ChEBI" id="CHEBI:57783"/>
        <dbReference type="ChEBI" id="CHEBI:58349"/>
        <dbReference type="ChEBI" id="CHEBI:68483"/>
        <dbReference type="ChEBI" id="CHEBI:70757"/>
        <dbReference type="EC" id="1.3.1.98"/>
    </reaction>
</comment>
<comment type="cofactor">
    <cofactor evidence="1">
        <name>FAD</name>
        <dbReference type="ChEBI" id="CHEBI:57692"/>
    </cofactor>
</comment>
<comment type="pathway">
    <text evidence="1">Cell wall biogenesis; peptidoglycan biosynthesis.</text>
</comment>
<comment type="subcellular location">
    <subcellularLocation>
        <location evidence="1">Cytoplasm</location>
    </subcellularLocation>
</comment>
<comment type="similarity">
    <text evidence="1">Belongs to the MurB family.</text>
</comment>
<feature type="chain" id="PRO_1000117150" description="UDP-N-acetylenolpyruvoylglucosamine reductase">
    <location>
        <begin position="1"/>
        <end position="350"/>
    </location>
</feature>
<feature type="domain" description="FAD-binding PCMH-type" evidence="1">
    <location>
        <begin position="24"/>
        <end position="195"/>
    </location>
</feature>
<feature type="active site" evidence="1">
    <location>
        <position position="172"/>
    </location>
</feature>
<feature type="active site" description="Proton donor" evidence="1">
    <location>
        <position position="245"/>
    </location>
</feature>
<feature type="active site" evidence="1">
    <location>
        <position position="342"/>
    </location>
</feature>